<comment type="function">
    <text evidence="1">Catalyzes the GTP-dependent ribosomal translocation step during translation elongation. During this step, the ribosome changes from the pre-translocational (PRE) to the post-translocational (POST) state as the newly formed A-site-bound peptidyl-tRNA and P-site-bound deacylated tRNA move to the P and E sites, respectively. Catalyzes the coordinated movement of the two tRNA molecules, the mRNA and conformational changes in the ribosome.</text>
</comment>
<comment type="subcellular location">
    <subcellularLocation>
        <location evidence="1">Cytoplasm</location>
    </subcellularLocation>
</comment>
<comment type="similarity">
    <text evidence="1">Belongs to the TRAFAC class translation factor GTPase superfamily. Classic translation factor GTPase family. EF-G/EF-2 subfamily.</text>
</comment>
<evidence type="ECO:0000255" key="1">
    <source>
        <dbReference type="HAMAP-Rule" id="MF_00054"/>
    </source>
</evidence>
<reference key="1">
    <citation type="journal article" date="2010" name="ISME J.">
        <title>The complete genome sequence of the algal symbiont Dinoroseobacter shibae: a hitchhiker's guide to life in the sea.</title>
        <authorList>
            <person name="Wagner-Dobler I."/>
            <person name="Ballhausen B."/>
            <person name="Berger M."/>
            <person name="Brinkhoff T."/>
            <person name="Buchholz I."/>
            <person name="Bunk B."/>
            <person name="Cypionka H."/>
            <person name="Daniel R."/>
            <person name="Drepper T."/>
            <person name="Gerdts G."/>
            <person name="Hahnke S."/>
            <person name="Han C."/>
            <person name="Jahn D."/>
            <person name="Kalhoefer D."/>
            <person name="Kiss H."/>
            <person name="Klenk H.P."/>
            <person name="Kyrpides N."/>
            <person name="Liebl W."/>
            <person name="Liesegang H."/>
            <person name="Meincke L."/>
            <person name="Pati A."/>
            <person name="Petersen J."/>
            <person name="Piekarski T."/>
            <person name="Pommerenke C."/>
            <person name="Pradella S."/>
            <person name="Pukall R."/>
            <person name="Rabus R."/>
            <person name="Stackebrandt E."/>
            <person name="Thole S."/>
            <person name="Thompson L."/>
            <person name="Tielen P."/>
            <person name="Tomasch J."/>
            <person name="von Jan M."/>
            <person name="Wanphrut N."/>
            <person name="Wichels A."/>
            <person name="Zech H."/>
            <person name="Simon M."/>
        </authorList>
    </citation>
    <scope>NUCLEOTIDE SEQUENCE [LARGE SCALE GENOMIC DNA]</scope>
    <source>
        <strain>DSM 16493 / NCIMB 14021 / DFL 12</strain>
    </source>
</reference>
<gene>
    <name evidence="1" type="primary">fusA</name>
    <name type="ordered locus">Dshi_0273</name>
</gene>
<proteinExistence type="inferred from homology"/>
<organism>
    <name type="scientific">Dinoroseobacter shibae (strain DSM 16493 / NCIMB 14021 / DFL 12)</name>
    <dbReference type="NCBI Taxonomy" id="398580"/>
    <lineage>
        <taxon>Bacteria</taxon>
        <taxon>Pseudomonadati</taxon>
        <taxon>Pseudomonadota</taxon>
        <taxon>Alphaproteobacteria</taxon>
        <taxon>Rhodobacterales</taxon>
        <taxon>Roseobacteraceae</taxon>
        <taxon>Dinoroseobacter</taxon>
    </lineage>
</organism>
<feature type="chain" id="PRO_1000074957" description="Elongation factor G">
    <location>
        <begin position="1"/>
        <end position="705"/>
    </location>
</feature>
<feature type="domain" description="tr-type G">
    <location>
        <begin position="8"/>
        <end position="294"/>
    </location>
</feature>
<feature type="binding site" evidence="1">
    <location>
        <begin position="17"/>
        <end position="24"/>
    </location>
    <ligand>
        <name>GTP</name>
        <dbReference type="ChEBI" id="CHEBI:37565"/>
    </ligand>
</feature>
<feature type="binding site" evidence="1">
    <location>
        <begin position="92"/>
        <end position="96"/>
    </location>
    <ligand>
        <name>GTP</name>
        <dbReference type="ChEBI" id="CHEBI:37565"/>
    </ligand>
</feature>
<feature type="binding site" evidence="1">
    <location>
        <begin position="146"/>
        <end position="149"/>
    </location>
    <ligand>
        <name>GTP</name>
        <dbReference type="ChEBI" id="CHEBI:37565"/>
    </ligand>
</feature>
<keyword id="KW-0963">Cytoplasm</keyword>
<keyword id="KW-0251">Elongation factor</keyword>
<keyword id="KW-0342">GTP-binding</keyword>
<keyword id="KW-0547">Nucleotide-binding</keyword>
<keyword id="KW-0648">Protein biosynthesis</keyword>
<keyword id="KW-1185">Reference proteome</keyword>
<name>EFG_DINSH</name>
<sequence>MARDYPLDRYRNFGIMAHIDAGKTTCSERILYYTGKSHNIGEVHDGAATMDWMEQEQERGITITSAATTTFWERTEDGETADTPKHRLNIIDTPGHVDFTIEVERSLAVLDGAVCVLDANAGVEPQTETVWRQADRYKVPRIVFVNKMDKIGADFFNCVHMIEDRTGARAVPVAIPIGSENELEGLVDLVTMQEWVYKGDDLGASWVKGEIRDSLKDVCEEWRGKMIEAAVEEDDDAMMEYLEGNEPDVPTLRALLRKGTLALHFVPVLGGSAFKNKGVQPLLNAVIDYLPSPLDVVDYMGFAPGDENEERNIPRRADDDMPFSGLAFKIMNDPFVGSLTFTRIYSGTMNKGDTVLNSTKGKKERIGRMMMMHSNNREEIEEAFAGDIIALAGLKDTTTGDTLCDVKEPVVLETMTFPDPVIEIAVEPKTKNDQEKMSQGLARLAAEDPSFRVETDIESGQTIMKGMGELHLDILVDRLKREFKVEANIGAPQVAYRETIGHEVEHTYTHKKQSGGSGQFAEVKLVISPTEPGEGYSFESKIVGGAVPKEYIPGVEKGIKSVMDSGPLAGFPVIDFKVALVDGKFHDVDSSVLAFEIAARMGMREGMKKAGAKLLEPVMKVEVVTPEEYTGGIIGDLTSRRGQVTGQEPRGNAVAINAFVPLANMFGYINTLRSMSSGRAQFTMQFDHYDPVPANISQEIQEKFA</sequence>
<protein>
    <recommendedName>
        <fullName evidence="1">Elongation factor G</fullName>
        <shortName evidence="1">EF-G</shortName>
    </recommendedName>
</protein>
<dbReference type="EMBL" id="CP000830">
    <property type="protein sequence ID" value="ABV92022.1"/>
    <property type="molecule type" value="Genomic_DNA"/>
</dbReference>
<dbReference type="RefSeq" id="WP_012176954.1">
    <property type="nucleotide sequence ID" value="NC_009952.1"/>
</dbReference>
<dbReference type="SMR" id="A8LM45"/>
<dbReference type="STRING" id="398580.Dshi_0273"/>
<dbReference type="KEGG" id="dsh:Dshi_0273"/>
<dbReference type="eggNOG" id="COG0480">
    <property type="taxonomic scope" value="Bacteria"/>
</dbReference>
<dbReference type="HOGENOM" id="CLU_002794_4_1_5"/>
<dbReference type="OrthoDB" id="9802948at2"/>
<dbReference type="Proteomes" id="UP000006833">
    <property type="component" value="Chromosome"/>
</dbReference>
<dbReference type="GO" id="GO:0005737">
    <property type="term" value="C:cytoplasm"/>
    <property type="evidence" value="ECO:0007669"/>
    <property type="project" value="UniProtKB-SubCell"/>
</dbReference>
<dbReference type="GO" id="GO:0005525">
    <property type="term" value="F:GTP binding"/>
    <property type="evidence" value="ECO:0007669"/>
    <property type="project" value="UniProtKB-UniRule"/>
</dbReference>
<dbReference type="GO" id="GO:0003924">
    <property type="term" value="F:GTPase activity"/>
    <property type="evidence" value="ECO:0007669"/>
    <property type="project" value="InterPro"/>
</dbReference>
<dbReference type="GO" id="GO:0003746">
    <property type="term" value="F:translation elongation factor activity"/>
    <property type="evidence" value="ECO:0007669"/>
    <property type="project" value="UniProtKB-UniRule"/>
</dbReference>
<dbReference type="GO" id="GO:0032790">
    <property type="term" value="P:ribosome disassembly"/>
    <property type="evidence" value="ECO:0007669"/>
    <property type="project" value="TreeGrafter"/>
</dbReference>
<dbReference type="CDD" id="cd01886">
    <property type="entry name" value="EF-G"/>
    <property type="match status" value="1"/>
</dbReference>
<dbReference type="CDD" id="cd16262">
    <property type="entry name" value="EFG_III"/>
    <property type="match status" value="1"/>
</dbReference>
<dbReference type="CDD" id="cd01434">
    <property type="entry name" value="EFG_mtEFG1_IV"/>
    <property type="match status" value="1"/>
</dbReference>
<dbReference type="CDD" id="cd03713">
    <property type="entry name" value="EFG_mtEFG_C"/>
    <property type="match status" value="1"/>
</dbReference>
<dbReference type="CDD" id="cd04088">
    <property type="entry name" value="EFG_mtEFG_II"/>
    <property type="match status" value="1"/>
</dbReference>
<dbReference type="FunFam" id="2.40.30.10:FF:000006">
    <property type="entry name" value="Elongation factor G"/>
    <property type="match status" value="1"/>
</dbReference>
<dbReference type="FunFam" id="3.30.230.10:FF:000003">
    <property type="entry name" value="Elongation factor G"/>
    <property type="match status" value="1"/>
</dbReference>
<dbReference type="FunFam" id="3.30.70.240:FF:000001">
    <property type="entry name" value="Elongation factor G"/>
    <property type="match status" value="1"/>
</dbReference>
<dbReference type="FunFam" id="3.30.70.870:FF:000001">
    <property type="entry name" value="Elongation factor G"/>
    <property type="match status" value="1"/>
</dbReference>
<dbReference type="FunFam" id="3.40.50.300:FF:000029">
    <property type="entry name" value="Elongation factor G"/>
    <property type="match status" value="1"/>
</dbReference>
<dbReference type="Gene3D" id="3.30.230.10">
    <property type="match status" value="1"/>
</dbReference>
<dbReference type="Gene3D" id="3.30.70.240">
    <property type="match status" value="1"/>
</dbReference>
<dbReference type="Gene3D" id="3.30.70.870">
    <property type="entry name" value="Elongation Factor G (Translational Gtpase), domain 3"/>
    <property type="match status" value="1"/>
</dbReference>
<dbReference type="Gene3D" id="3.40.50.300">
    <property type="entry name" value="P-loop containing nucleotide triphosphate hydrolases"/>
    <property type="match status" value="1"/>
</dbReference>
<dbReference type="Gene3D" id="2.40.30.10">
    <property type="entry name" value="Translation factors"/>
    <property type="match status" value="1"/>
</dbReference>
<dbReference type="HAMAP" id="MF_00054_B">
    <property type="entry name" value="EF_G_EF_2_B"/>
    <property type="match status" value="1"/>
</dbReference>
<dbReference type="InterPro" id="IPR053905">
    <property type="entry name" value="EF-G-like_DII"/>
</dbReference>
<dbReference type="InterPro" id="IPR041095">
    <property type="entry name" value="EFG_II"/>
</dbReference>
<dbReference type="InterPro" id="IPR009022">
    <property type="entry name" value="EFG_III"/>
</dbReference>
<dbReference type="InterPro" id="IPR035647">
    <property type="entry name" value="EFG_III/V"/>
</dbReference>
<dbReference type="InterPro" id="IPR047872">
    <property type="entry name" value="EFG_IV"/>
</dbReference>
<dbReference type="InterPro" id="IPR035649">
    <property type="entry name" value="EFG_V"/>
</dbReference>
<dbReference type="InterPro" id="IPR000640">
    <property type="entry name" value="EFG_V-like"/>
</dbReference>
<dbReference type="InterPro" id="IPR031157">
    <property type="entry name" value="G_TR_CS"/>
</dbReference>
<dbReference type="InterPro" id="IPR027417">
    <property type="entry name" value="P-loop_NTPase"/>
</dbReference>
<dbReference type="InterPro" id="IPR020568">
    <property type="entry name" value="Ribosomal_Su5_D2-typ_SF"/>
</dbReference>
<dbReference type="InterPro" id="IPR014721">
    <property type="entry name" value="Ribsml_uS5_D2-typ_fold_subgr"/>
</dbReference>
<dbReference type="InterPro" id="IPR005225">
    <property type="entry name" value="Small_GTP-bd"/>
</dbReference>
<dbReference type="InterPro" id="IPR000795">
    <property type="entry name" value="T_Tr_GTP-bd_dom"/>
</dbReference>
<dbReference type="InterPro" id="IPR009000">
    <property type="entry name" value="Transl_B-barrel_sf"/>
</dbReference>
<dbReference type="InterPro" id="IPR004540">
    <property type="entry name" value="Transl_elong_EFG/EF2"/>
</dbReference>
<dbReference type="InterPro" id="IPR005517">
    <property type="entry name" value="Transl_elong_EFG/EF2_IV"/>
</dbReference>
<dbReference type="NCBIfam" id="TIGR00484">
    <property type="entry name" value="EF-G"/>
    <property type="match status" value="1"/>
</dbReference>
<dbReference type="NCBIfam" id="NF009381">
    <property type="entry name" value="PRK12740.1-5"/>
    <property type="match status" value="1"/>
</dbReference>
<dbReference type="NCBIfam" id="TIGR00231">
    <property type="entry name" value="small_GTP"/>
    <property type="match status" value="1"/>
</dbReference>
<dbReference type="PANTHER" id="PTHR43261:SF1">
    <property type="entry name" value="RIBOSOME-RELEASING FACTOR 2, MITOCHONDRIAL"/>
    <property type="match status" value="1"/>
</dbReference>
<dbReference type="PANTHER" id="PTHR43261">
    <property type="entry name" value="TRANSLATION ELONGATION FACTOR G-RELATED"/>
    <property type="match status" value="1"/>
</dbReference>
<dbReference type="Pfam" id="PF22042">
    <property type="entry name" value="EF-G_D2"/>
    <property type="match status" value="1"/>
</dbReference>
<dbReference type="Pfam" id="PF00679">
    <property type="entry name" value="EFG_C"/>
    <property type="match status" value="1"/>
</dbReference>
<dbReference type="Pfam" id="PF14492">
    <property type="entry name" value="EFG_III"/>
    <property type="match status" value="1"/>
</dbReference>
<dbReference type="Pfam" id="PF03764">
    <property type="entry name" value="EFG_IV"/>
    <property type="match status" value="1"/>
</dbReference>
<dbReference type="Pfam" id="PF00009">
    <property type="entry name" value="GTP_EFTU"/>
    <property type="match status" value="1"/>
</dbReference>
<dbReference type="PRINTS" id="PR00315">
    <property type="entry name" value="ELONGATNFCT"/>
</dbReference>
<dbReference type="SMART" id="SM00838">
    <property type="entry name" value="EFG_C"/>
    <property type="match status" value="1"/>
</dbReference>
<dbReference type="SMART" id="SM00889">
    <property type="entry name" value="EFG_IV"/>
    <property type="match status" value="1"/>
</dbReference>
<dbReference type="SUPFAM" id="SSF54980">
    <property type="entry name" value="EF-G C-terminal domain-like"/>
    <property type="match status" value="2"/>
</dbReference>
<dbReference type="SUPFAM" id="SSF52540">
    <property type="entry name" value="P-loop containing nucleoside triphosphate hydrolases"/>
    <property type="match status" value="1"/>
</dbReference>
<dbReference type="SUPFAM" id="SSF54211">
    <property type="entry name" value="Ribosomal protein S5 domain 2-like"/>
    <property type="match status" value="1"/>
</dbReference>
<dbReference type="SUPFAM" id="SSF50447">
    <property type="entry name" value="Translation proteins"/>
    <property type="match status" value="1"/>
</dbReference>
<dbReference type="PROSITE" id="PS00301">
    <property type="entry name" value="G_TR_1"/>
    <property type="match status" value="1"/>
</dbReference>
<dbReference type="PROSITE" id="PS51722">
    <property type="entry name" value="G_TR_2"/>
    <property type="match status" value="1"/>
</dbReference>
<accession>A8LM45</accession>